<organism>
    <name type="scientific">Bacillus cereus (strain ATCC 10987 / NRS 248)</name>
    <dbReference type="NCBI Taxonomy" id="222523"/>
    <lineage>
        <taxon>Bacteria</taxon>
        <taxon>Bacillati</taxon>
        <taxon>Bacillota</taxon>
        <taxon>Bacilli</taxon>
        <taxon>Bacillales</taxon>
        <taxon>Bacillaceae</taxon>
        <taxon>Bacillus</taxon>
        <taxon>Bacillus cereus group</taxon>
    </lineage>
</organism>
<comment type="similarity">
    <text evidence="2">Belongs to the UPF0337 (CsbD) family.</text>
</comment>
<protein>
    <recommendedName>
        <fullName>UPF0337 protein BCE_1081</fullName>
    </recommendedName>
</protein>
<name>Y1081_BACC1</name>
<gene>
    <name type="ordered locus">BCE_1081</name>
</gene>
<sequence>MSGGLKEQITGKVEKTKGQVKEGIGEVTEDRELKNEGKWEKTKGTIKEKVGKVKQKISDGLDNKE</sequence>
<feature type="chain" id="PRO_0000209982" description="UPF0337 protein BCE_1081">
    <location>
        <begin position="1"/>
        <end position="65"/>
    </location>
</feature>
<feature type="region of interest" description="Disordered" evidence="1">
    <location>
        <begin position="1"/>
        <end position="28"/>
    </location>
</feature>
<feature type="compositionally biased region" description="Basic and acidic residues" evidence="1">
    <location>
        <begin position="12"/>
        <end position="28"/>
    </location>
</feature>
<evidence type="ECO:0000256" key="1">
    <source>
        <dbReference type="SAM" id="MobiDB-lite"/>
    </source>
</evidence>
<evidence type="ECO:0000305" key="2"/>
<accession>Q73CI4</accession>
<dbReference type="EMBL" id="AE017194">
    <property type="protein sequence ID" value="AAS40012.1"/>
    <property type="molecule type" value="Genomic_DNA"/>
</dbReference>
<dbReference type="SMR" id="Q73CI4"/>
<dbReference type="KEGG" id="bca:BCE_1081"/>
<dbReference type="HOGENOM" id="CLU_135567_3_0_9"/>
<dbReference type="Proteomes" id="UP000002527">
    <property type="component" value="Chromosome"/>
</dbReference>
<dbReference type="Gene3D" id="1.10.1470.10">
    <property type="entry name" value="YjbJ"/>
    <property type="match status" value="1"/>
</dbReference>
<dbReference type="InterPro" id="IPR008462">
    <property type="entry name" value="CsbD"/>
</dbReference>
<dbReference type="InterPro" id="IPR050423">
    <property type="entry name" value="UPF0337_stress_rsp"/>
</dbReference>
<dbReference type="InterPro" id="IPR036629">
    <property type="entry name" value="YjbJ_sf"/>
</dbReference>
<dbReference type="PANTHER" id="PTHR34977">
    <property type="entry name" value="UPF0337 PROTEIN YJBJ"/>
    <property type="match status" value="1"/>
</dbReference>
<dbReference type="PANTHER" id="PTHR34977:SF1">
    <property type="entry name" value="UPF0337 PROTEIN YJBJ"/>
    <property type="match status" value="1"/>
</dbReference>
<dbReference type="Pfam" id="PF05532">
    <property type="entry name" value="CsbD"/>
    <property type="match status" value="1"/>
</dbReference>
<dbReference type="SUPFAM" id="SSF69047">
    <property type="entry name" value="Hypothetical protein YjbJ"/>
    <property type="match status" value="1"/>
</dbReference>
<reference key="1">
    <citation type="journal article" date="2004" name="Nucleic Acids Res.">
        <title>The genome sequence of Bacillus cereus ATCC 10987 reveals metabolic adaptations and a large plasmid related to Bacillus anthracis pXO1.</title>
        <authorList>
            <person name="Rasko D.A."/>
            <person name="Ravel J."/>
            <person name="Oekstad O.A."/>
            <person name="Helgason E."/>
            <person name="Cer R.Z."/>
            <person name="Jiang L."/>
            <person name="Shores K.A."/>
            <person name="Fouts D.E."/>
            <person name="Tourasse N.J."/>
            <person name="Angiuoli S.V."/>
            <person name="Kolonay J.F."/>
            <person name="Nelson W.C."/>
            <person name="Kolstoe A.-B."/>
            <person name="Fraser C.M."/>
            <person name="Read T.D."/>
        </authorList>
    </citation>
    <scope>NUCLEOTIDE SEQUENCE [LARGE SCALE GENOMIC DNA]</scope>
    <source>
        <strain>ATCC 10987 / NRS 248</strain>
    </source>
</reference>
<proteinExistence type="inferred from homology"/>